<name>NCAP_DUGBV</name>
<organismHost>
    <name type="scientific">Amblyomma variegatum</name>
    <name type="common">Tropical bont tick</name>
    <dbReference type="NCBI Taxonomy" id="34610"/>
</organismHost>
<organismHost>
    <name type="scientific">Homo sapiens</name>
    <name type="common">Human</name>
    <dbReference type="NCBI Taxonomy" id="9606"/>
</organismHost>
<organismHost>
    <name type="scientific">Hyalomma rufipes</name>
    <name type="common">Tick</name>
    <name type="synonym">Hyalomma marginatum rufipes</name>
    <dbReference type="NCBI Taxonomy" id="72862"/>
</organismHost>
<organismHost>
    <name type="scientific">Hyalomma truncatum</name>
    <dbReference type="NCBI Taxonomy" id="72855"/>
</organismHost>
<organismHost>
    <name type="scientific">Rhipicephalus</name>
    <dbReference type="NCBI Taxonomy" id="34630"/>
</organismHost>
<organismHost>
    <name type="scientific">Rhipicephalus annulatus</name>
    <dbReference type="NCBI Taxonomy" id="34611"/>
</organismHost>
<organismHost>
    <name type="scientific">Rhipicephalus decoloratus</name>
    <name type="common">African blue tick</name>
    <name type="synonym">Boophilus decoloratus</name>
    <dbReference type="NCBI Taxonomy" id="60189"/>
</organismHost>
<organismHost>
    <name type="scientific">Rhipicephalus geigyi</name>
    <dbReference type="NCBI Taxonomy" id="136141"/>
</organismHost>
<dbReference type="EMBL" id="M25150">
    <property type="protein sequence ID" value="AAA42975.1"/>
    <property type="molecule type" value="Genomic_RNA"/>
</dbReference>
<dbReference type="PIR" id="A34748">
    <property type="entry name" value="VHVUDU"/>
</dbReference>
<dbReference type="SMR" id="P15190"/>
<dbReference type="GO" id="GO:0019029">
    <property type="term" value="C:helical viral capsid"/>
    <property type="evidence" value="ECO:0007669"/>
    <property type="project" value="UniProtKB-KW"/>
</dbReference>
<dbReference type="GO" id="GO:1990904">
    <property type="term" value="C:ribonucleoprotein complex"/>
    <property type="evidence" value="ECO:0007669"/>
    <property type="project" value="UniProtKB-KW"/>
</dbReference>
<dbReference type="GO" id="GO:0019013">
    <property type="term" value="C:viral nucleocapsid"/>
    <property type="evidence" value="ECO:0007669"/>
    <property type="project" value="UniProtKB-KW"/>
</dbReference>
<dbReference type="GO" id="GO:0003723">
    <property type="term" value="F:RNA binding"/>
    <property type="evidence" value="ECO:0007669"/>
    <property type="project" value="UniProtKB-KW"/>
</dbReference>
<dbReference type="Gene3D" id="1.20.58.1110">
    <property type="match status" value="1"/>
</dbReference>
<dbReference type="InterPro" id="IPR003486">
    <property type="entry name" value="Nairo_nucleocap"/>
</dbReference>
<dbReference type="Pfam" id="PF02477">
    <property type="entry name" value="Nairo_nucleo"/>
    <property type="match status" value="1"/>
</dbReference>
<dbReference type="PIRSF" id="PIRSF003950">
    <property type="entry name" value="N_NairoV"/>
    <property type="match status" value="1"/>
</dbReference>
<reference key="1">
    <citation type="journal article" date="1990" name="Virology">
        <title>Coding strategy of the S RNA segment of Dugbe virus (Nairovirus; Bunyaviridae).</title>
        <authorList>
            <person name="Ward V.K."/>
            <person name="Marriott A.C."/>
            <person name="El-Ghorr A.A."/>
            <person name="Nuttall P.A."/>
        </authorList>
    </citation>
    <scope>NUCLEOTIDE SEQUENCE [GENOMIC RNA]</scope>
    <source>
        <strain>Isolate ARD 44313</strain>
    </source>
</reference>
<sequence>MENQIKANNKKEFDEWFKPFSEKLQLRSNLTNSASLCDRVPDLALAEMKMALATDDKEKDSVFSNALVEATRFCAPIYECAWTCSTGVVQKSLSWFDKNKDFIKLWDAKYMDLKKGIPEPEQLVSYQQAAQKWRKDVGYEINQFTRSLTHPVVAEYKVPGELLLMSRMLSDMIRRRNVLLNGDGENAGKKVLISREHVSWGRELAGGKFQVVFNPPWGDINKCGKSGIPLAATAMVKVAELDGSKKLEDIRQALLDLKKWVEDNKDALEDGKGNELVQTMTKHLAKHVELSKKSNALRAQGAQIDTPFSAYYWAWSAGVKPETFFTLSQFLFEMGQSARGGKKMIKALTSTPLRWGKGLINLFADDDFLGNRLYMHPAVLTPGRMSEMGACFGVIPVASPEDAILGSGHSKNILNFKIDTSVQNPCASTIVQLIQNPEIWL</sequence>
<keyword id="KW-0167">Capsid protein</keyword>
<keyword id="KW-1139">Helical capsid protein</keyword>
<keyword id="KW-0687">Ribonucleoprotein</keyword>
<keyword id="KW-0694">RNA-binding</keyword>
<keyword id="KW-0543">Viral nucleoprotein</keyword>
<keyword id="KW-0946">Virion</keyword>
<proteinExistence type="inferred from homology"/>
<comment type="function">
    <text evidence="2">Binds dsRNA and ssRNA and probably participates in the packaging of viral genome. In the dsRNA binding mode, the nucleocapsid protein specifically binds to the vRNA panhandle secondary structure formed at the termini of viral genome. Does not discriminate between viral and nonviral RNAs through ssRNA binding mode. Displays dsDNA endonuclease activity that is sequence non-specific.</text>
</comment>
<comment type="cofactor">
    <cofactor evidence="2">
        <name>Mn(2+)</name>
        <dbReference type="ChEBI" id="CHEBI:29035"/>
    </cofactor>
    <text evidence="2">Stimulated by divalent cations such as Mn2+, Co2+, and Mg2+.</text>
</comment>
<comment type="subunit">
    <text evidence="2">Probable homooligomer; forms a double superhelical polymer. Monomer.</text>
</comment>
<comment type="subcellular location">
    <subcellularLocation>
        <location evidence="1">Virion</location>
    </subcellularLocation>
    <text evidence="2">Internal protein of virus particle.</text>
</comment>
<comment type="domain">
    <text evidence="1 2">The DEVD motif is a CASP3/caspase 3 cleavage site essential for viral replication in host cell (By similarity). However, the importance for viral replication is apprently not linked to caspase cleavage (By similarity). This motif is involved in homooligomerization (By similarity).</text>
</comment>
<comment type="PTM">
    <text evidence="1 2">Cleaved at the DEVD motif by host CASP3/caspase 3 in mammalian cells giving rise to cleavage products that remain associated. Only the monomeric form is cleaved. Little or no cleavage in tick cells. Caspase cleavage reduces the viral polymerase activity (By similarity). Caspase cleavage is not required for productive infection in mammalian or tick host cells (By similarity).</text>
</comment>
<comment type="similarity">
    <text evidence="3">Belongs to the nairovirus nucleocapsid protein family.</text>
</comment>
<feature type="chain" id="PRO_0000222007" description="Nucleoprotein">
    <location>
        <begin position="1"/>
        <end position="441"/>
    </location>
</feature>
<feature type="short sequence motif" description="DEVD" evidence="2">
    <location>
        <begin position="266"/>
        <end position="269"/>
    </location>
</feature>
<feature type="site" description="Homooligomerization" evidence="1">
    <location>
        <position position="213"/>
    </location>
</feature>
<feature type="site" description="Cleavage by host CASP3/caspase 3" evidence="2">
    <location>
        <begin position="269"/>
        <end position="270"/>
    </location>
</feature>
<feature type="site" description="Homooligomerization" evidence="1">
    <location>
        <position position="277"/>
    </location>
</feature>
<feature type="site" description="Homooligomerization" evidence="1">
    <location>
        <position position="352"/>
    </location>
</feature>
<accession>P15190</accession>
<protein>
    <recommendedName>
        <fullName>Nucleoprotein</fullName>
    </recommendedName>
    <alternativeName>
        <fullName>Nucleocapsid protein</fullName>
        <shortName>Protein N</shortName>
    </alternativeName>
</protein>
<organism>
    <name type="scientific">Dugbe virus</name>
    <dbReference type="NCBI Taxonomy" id="3052514"/>
    <lineage>
        <taxon>Viruses</taxon>
        <taxon>Riboviria</taxon>
        <taxon>Orthornavirae</taxon>
        <taxon>Negarnaviricota</taxon>
        <taxon>Polyploviricotina</taxon>
        <taxon>Ellioviricetes</taxon>
        <taxon>Bunyavirales</taxon>
        <taxon>Nairoviridae</taxon>
        <taxon>Orthonairovirus</taxon>
    </lineage>
</organism>
<evidence type="ECO:0000250" key="1">
    <source>
        <dbReference type="UniProtKB" id="P27318"/>
    </source>
</evidence>
<evidence type="ECO:0000250" key="2">
    <source>
        <dbReference type="UniProtKB" id="P89522"/>
    </source>
</evidence>
<evidence type="ECO:0000305" key="3"/>
<gene>
    <name type="primary">N</name>
</gene>